<dbReference type="EC" id="5.6.1.7" evidence="1"/>
<dbReference type="EMBL" id="U17933">
    <property type="protein sequence ID" value="AAB39052.1"/>
    <property type="molecule type" value="Genomic_DNA"/>
</dbReference>
<dbReference type="EMBL" id="U17935">
    <property type="protein sequence ID" value="AAB39054.1"/>
    <property type="molecule type" value="Genomic_DNA"/>
</dbReference>
<dbReference type="SMR" id="Q49375"/>
<dbReference type="GO" id="GO:0005737">
    <property type="term" value="C:cytoplasm"/>
    <property type="evidence" value="ECO:0007669"/>
    <property type="project" value="UniProtKB-SubCell"/>
</dbReference>
<dbReference type="GO" id="GO:0005524">
    <property type="term" value="F:ATP binding"/>
    <property type="evidence" value="ECO:0007669"/>
    <property type="project" value="UniProtKB-KW"/>
</dbReference>
<dbReference type="GO" id="GO:0140662">
    <property type="term" value="F:ATP-dependent protein folding chaperone"/>
    <property type="evidence" value="ECO:0007669"/>
    <property type="project" value="InterPro"/>
</dbReference>
<dbReference type="GO" id="GO:0016853">
    <property type="term" value="F:isomerase activity"/>
    <property type="evidence" value="ECO:0007669"/>
    <property type="project" value="UniProtKB-KW"/>
</dbReference>
<dbReference type="GO" id="GO:0042026">
    <property type="term" value="P:protein refolding"/>
    <property type="evidence" value="ECO:0007669"/>
    <property type="project" value="InterPro"/>
</dbReference>
<dbReference type="Gene3D" id="1.10.560.10">
    <property type="entry name" value="GroEL-like equatorial domain"/>
    <property type="match status" value="1"/>
</dbReference>
<dbReference type="Gene3D" id="3.30.260.10">
    <property type="entry name" value="TCP-1-like chaperonin intermediate domain"/>
    <property type="match status" value="1"/>
</dbReference>
<dbReference type="InterPro" id="IPR001844">
    <property type="entry name" value="Cpn60/GroEL"/>
</dbReference>
<dbReference type="InterPro" id="IPR002423">
    <property type="entry name" value="Cpn60/GroEL/TCP-1"/>
</dbReference>
<dbReference type="InterPro" id="IPR027413">
    <property type="entry name" value="GROEL-like_equatorial_sf"/>
</dbReference>
<dbReference type="InterPro" id="IPR027410">
    <property type="entry name" value="TCP-1-like_intermed_sf"/>
</dbReference>
<dbReference type="PANTHER" id="PTHR45633">
    <property type="entry name" value="60 KDA HEAT SHOCK PROTEIN, MITOCHONDRIAL"/>
    <property type="match status" value="1"/>
</dbReference>
<dbReference type="Pfam" id="PF00118">
    <property type="entry name" value="Cpn60_TCP1"/>
    <property type="match status" value="1"/>
</dbReference>
<dbReference type="SUPFAM" id="SSF48592">
    <property type="entry name" value="GroEL equatorial domain-like"/>
    <property type="match status" value="1"/>
</dbReference>
<gene>
    <name evidence="1" type="primary">groEL</name>
    <name evidence="1" type="synonym">groL</name>
    <name type="synonym">mopA</name>
</gene>
<sequence length="120" mass="12325">PYEKIGAELVKEVAKKTDDVAGDGTTTATVLAQALVKEGLRNVAAGANPLGLKRGIEKAVEKITQTLLSSAKDVETKEQIAATAGISAGDQSIGDLIAEAMDKVGNEGVITVEESNTFGL</sequence>
<proteinExistence type="inferred from homology"/>
<reference key="1">
    <citation type="journal article" date="1995" name="Arch. Pathol. Lab. Med.">
        <title>Rapid Mycobacterium species assignment and unambiguous identification of mutations associated with antimicrobial resistance in Mycobacterium tuberculosis by automated DNA sequencing.</title>
        <authorList>
            <person name="Kapur V."/>
            <person name="Li L.L."/>
            <person name="Hamrick M.R."/>
            <person name="Plikaytis B.B."/>
            <person name="Shinnick T.M."/>
            <person name="Telenti A."/>
            <person name="Jacobs W.R. Jr."/>
            <person name="Banerjee A."/>
            <person name="Cole S."/>
            <person name="Yuen K.Y."/>
            <person name="Clarridge J.E."/>
            <person name="Kreiswirth B.N."/>
            <person name="Musser J.M."/>
        </authorList>
    </citation>
    <scope>NUCLEOTIDE SEQUENCE [GENOMIC DNA]</scope>
    <source>
        <strain>184</strain>
        <strain>85-736</strain>
    </source>
</reference>
<keyword id="KW-0067">ATP-binding</keyword>
<keyword id="KW-0143">Chaperone</keyword>
<keyword id="KW-0963">Cytoplasm</keyword>
<keyword id="KW-0413">Isomerase</keyword>
<keyword id="KW-0547">Nucleotide-binding</keyword>
<keyword id="KW-0346">Stress response</keyword>
<accession>Q49375</accession>
<accession>Q49376</accession>
<name>CH60_MYCGO</name>
<organism>
    <name type="scientific">Mycobacterium gordonae</name>
    <dbReference type="NCBI Taxonomy" id="1778"/>
    <lineage>
        <taxon>Bacteria</taxon>
        <taxon>Bacillati</taxon>
        <taxon>Actinomycetota</taxon>
        <taxon>Actinomycetes</taxon>
        <taxon>Mycobacteriales</taxon>
        <taxon>Mycobacteriaceae</taxon>
        <taxon>Mycobacterium</taxon>
    </lineage>
</organism>
<feature type="chain" id="PRO_0000063433" description="Chaperonin GroEL">
    <location>
        <begin position="1" status="less than"/>
        <end position="120" status="greater than"/>
    </location>
</feature>
<feature type="binding site" evidence="1">
    <location>
        <begin position="23"/>
        <end position="27"/>
    </location>
    <ligand>
        <name>ATP</name>
        <dbReference type="ChEBI" id="CHEBI:30616"/>
    </ligand>
</feature>
<feature type="sequence variant" description="In strain: 85-736.">
    <original>G</original>
    <variation>A</variation>
    <location>
        <position position="51"/>
    </location>
</feature>
<feature type="sequence variant" description="In strain: 85-736.">
    <original>I</original>
    <variation>V</variation>
    <location>
        <position position="63"/>
    </location>
</feature>
<feature type="non-terminal residue">
    <location>
        <position position="1"/>
    </location>
</feature>
<feature type="non-terminal residue">
    <location>
        <position position="120"/>
    </location>
</feature>
<evidence type="ECO:0000255" key="1">
    <source>
        <dbReference type="HAMAP-Rule" id="MF_00600"/>
    </source>
</evidence>
<evidence type="ECO:0000305" key="2"/>
<comment type="function">
    <text evidence="1">Together with its co-chaperonin GroES, plays an essential role in assisting protein folding. The GroEL-GroES system forms a nano-cage that allows encapsulation of the non-native substrate proteins and provides a physical environment optimized to promote and accelerate protein folding.</text>
</comment>
<comment type="catalytic activity">
    <reaction evidence="1">
        <text>ATP + H2O + a folded polypeptide = ADP + phosphate + an unfolded polypeptide.</text>
        <dbReference type="EC" id="5.6.1.7"/>
    </reaction>
</comment>
<comment type="subunit">
    <text evidence="1">Forms a cylinder of 14 subunits composed of two heptameric rings stacked back-to-back. Interacts with the co-chaperonin GroES.</text>
</comment>
<comment type="subcellular location">
    <subcellularLocation>
        <location evidence="1">Cytoplasm</location>
    </subcellularLocation>
</comment>
<comment type="similarity">
    <text evidence="1 2">Belongs to the chaperonin (HSP60) family.</text>
</comment>
<protein>
    <recommendedName>
        <fullName evidence="1">Chaperonin GroEL</fullName>
        <ecNumber evidence="1">5.6.1.7</ecNumber>
    </recommendedName>
    <alternativeName>
        <fullName evidence="1">60 kDa chaperonin</fullName>
    </alternativeName>
    <alternativeName>
        <fullName>65 kDa heat shock protein</fullName>
    </alternativeName>
    <alternativeName>
        <fullName evidence="1">Chaperonin-60</fullName>
        <shortName evidence="1">Cpn60</shortName>
    </alternativeName>
</protein>